<dbReference type="EC" id="1.11.1.9" evidence="2"/>
<dbReference type="EC" id="1.11.1.12" evidence="2"/>
<dbReference type="EMBL" id="AB121002">
    <property type="protein sequence ID" value="BAE17011.1"/>
    <property type="molecule type" value="mRNA"/>
</dbReference>
<dbReference type="SMR" id="Q4AEH9"/>
<dbReference type="PeroxiBase" id="3697">
    <property type="entry name" value="HlGPx02"/>
</dbReference>
<dbReference type="GO" id="GO:0005829">
    <property type="term" value="C:cytosol"/>
    <property type="evidence" value="ECO:0007669"/>
    <property type="project" value="UniProtKB-SubCell"/>
</dbReference>
<dbReference type="GO" id="GO:0004602">
    <property type="term" value="F:glutathione peroxidase activity"/>
    <property type="evidence" value="ECO:0000250"/>
    <property type="project" value="UniProtKB"/>
</dbReference>
<dbReference type="GO" id="GO:0047066">
    <property type="term" value="F:phospholipid-hydroperoxide glutathione peroxidase activity"/>
    <property type="evidence" value="ECO:0007669"/>
    <property type="project" value="RHEA"/>
</dbReference>
<dbReference type="GO" id="GO:0006979">
    <property type="term" value="P:response to oxidative stress"/>
    <property type="evidence" value="ECO:0007669"/>
    <property type="project" value="InterPro"/>
</dbReference>
<dbReference type="CDD" id="cd00340">
    <property type="entry name" value="GSH_Peroxidase"/>
    <property type="match status" value="1"/>
</dbReference>
<dbReference type="FunFam" id="3.40.30.10:FF:000151">
    <property type="entry name" value="Glutathione peroxidase"/>
    <property type="match status" value="1"/>
</dbReference>
<dbReference type="Gene3D" id="3.40.30.10">
    <property type="entry name" value="Glutaredoxin"/>
    <property type="match status" value="1"/>
</dbReference>
<dbReference type="InterPro" id="IPR000889">
    <property type="entry name" value="Glutathione_peroxidase"/>
</dbReference>
<dbReference type="InterPro" id="IPR029759">
    <property type="entry name" value="GPX_AS"/>
</dbReference>
<dbReference type="InterPro" id="IPR029760">
    <property type="entry name" value="GPX_CS"/>
</dbReference>
<dbReference type="InterPro" id="IPR036249">
    <property type="entry name" value="Thioredoxin-like_sf"/>
</dbReference>
<dbReference type="PANTHER" id="PTHR11592">
    <property type="entry name" value="GLUTATHIONE PEROXIDASE"/>
    <property type="match status" value="1"/>
</dbReference>
<dbReference type="PANTHER" id="PTHR11592:SF36">
    <property type="entry name" value="GLUTATHIONE PEROXIDASE 2"/>
    <property type="match status" value="1"/>
</dbReference>
<dbReference type="Pfam" id="PF00255">
    <property type="entry name" value="GSHPx"/>
    <property type="match status" value="1"/>
</dbReference>
<dbReference type="PIRSF" id="PIRSF000303">
    <property type="entry name" value="Glutathion_perox"/>
    <property type="match status" value="1"/>
</dbReference>
<dbReference type="PRINTS" id="PR01011">
    <property type="entry name" value="GLUTPROXDASE"/>
</dbReference>
<dbReference type="SUPFAM" id="SSF52833">
    <property type="entry name" value="Thioredoxin-like"/>
    <property type="match status" value="1"/>
</dbReference>
<dbReference type="PROSITE" id="PS00460">
    <property type="entry name" value="GLUTATHIONE_PEROXID_1"/>
    <property type="match status" value="1"/>
</dbReference>
<dbReference type="PROSITE" id="PS00763">
    <property type="entry name" value="GLUTATHIONE_PEROXID_2"/>
    <property type="match status" value="1"/>
</dbReference>
<dbReference type="PROSITE" id="PS51355">
    <property type="entry name" value="GLUTATHIONE_PEROXID_3"/>
    <property type="match status" value="1"/>
</dbReference>
<feature type="chain" id="PRO_0000066620" description="Glutathione peroxidase 2">
    <location>
        <begin position="1"/>
        <end position="190"/>
    </location>
</feature>
<feature type="active site" evidence="1">
    <location>
        <position position="40"/>
    </location>
</feature>
<feature type="non-standard amino acid" description="Selenocysteine" evidence="1">
    <location>
        <position position="40"/>
    </location>
</feature>
<evidence type="ECO:0000250" key="1">
    <source>
        <dbReference type="UniProtKB" id="O70325"/>
    </source>
</evidence>
<evidence type="ECO:0000250" key="2">
    <source>
        <dbReference type="UniProtKB" id="P18283"/>
    </source>
</evidence>
<evidence type="ECO:0000305" key="3"/>
<keyword id="KW-0963">Cytoplasm</keyword>
<keyword id="KW-0560">Oxidoreductase</keyword>
<keyword id="KW-0575">Peroxidase</keyword>
<keyword id="KW-0712">Selenocysteine</keyword>
<reference key="1">
    <citation type="journal article" date="2005" name="Comp. Biochem. Physiol.">
        <title>Structure, gene expression, and evolution of primate glutathione peroxidases.</title>
        <authorList>
            <person name="Fukuhara R."/>
            <person name="Kageyama T."/>
        </authorList>
    </citation>
    <scope>NUCLEOTIDE SEQUENCE [MRNA]</scope>
</reference>
<sequence>MAFIAKSFYDLSAISLDGEKVDFNTFRGRAVLIENVASLUGTTTRDFTQLNELQCRFPRRLVVLGFPCNQFGHQENCQNEEILNSLKYVRPGGGYQPTFTLVQKCEVNGQNEHPVFAYLKDKLPYPYDDPFSLMTDPKLIIWSPVRRSDVAWNFEKFLIGPEGEPFRRYSRTFPTINIEPDIKRLLKVAI</sequence>
<accession>Q4AEH9</accession>
<proteinExistence type="evidence at transcript level"/>
<comment type="function">
    <text evidence="2">Catalyzes the reduction of hydroperoxides in a glutathione-dependent manner thus regulating cellular redox homeostasis. Can reduce small soluble hydroperoxides such as H2O2, cumene hydroperoxide and tert-butyl hydroperoxide, as well as several fatty acid-derived hydroperoxides. Cannot reduce phosphatidycholine hydroperoxide.</text>
</comment>
<comment type="catalytic activity">
    <reaction evidence="2">
        <text>2 glutathione + H2O2 = glutathione disulfide + 2 H2O</text>
        <dbReference type="Rhea" id="RHEA:16833"/>
        <dbReference type="ChEBI" id="CHEBI:15377"/>
        <dbReference type="ChEBI" id="CHEBI:16240"/>
        <dbReference type="ChEBI" id="CHEBI:57925"/>
        <dbReference type="ChEBI" id="CHEBI:58297"/>
        <dbReference type="EC" id="1.11.1.9"/>
    </reaction>
    <physiologicalReaction direction="left-to-right" evidence="2">
        <dbReference type="Rhea" id="RHEA:16834"/>
    </physiologicalReaction>
</comment>
<comment type="catalytic activity">
    <reaction evidence="2">
        <text>a hydroperoxy polyunsaturated fatty acid + 2 glutathione = a hydroxy polyunsaturated fatty acid + glutathione disulfide + H2O</text>
        <dbReference type="Rhea" id="RHEA:19057"/>
        <dbReference type="ChEBI" id="CHEBI:15377"/>
        <dbReference type="ChEBI" id="CHEBI:57925"/>
        <dbReference type="ChEBI" id="CHEBI:58297"/>
        <dbReference type="ChEBI" id="CHEBI:131871"/>
        <dbReference type="ChEBI" id="CHEBI:134019"/>
        <dbReference type="EC" id="1.11.1.12"/>
    </reaction>
    <physiologicalReaction direction="left-to-right" evidence="2">
        <dbReference type="Rhea" id="RHEA:19058"/>
    </physiologicalReaction>
</comment>
<comment type="catalytic activity">
    <reaction evidence="2">
        <text>tert-butyl hydroperoxide + 2 glutathione = tert-butanol + glutathione disulfide + H2O</text>
        <dbReference type="Rhea" id="RHEA:69412"/>
        <dbReference type="ChEBI" id="CHEBI:15377"/>
        <dbReference type="ChEBI" id="CHEBI:45895"/>
        <dbReference type="ChEBI" id="CHEBI:57925"/>
        <dbReference type="ChEBI" id="CHEBI:58297"/>
        <dbReference type="ChEBI" id="CHEBI:64090"/>
    </reaction>
    <physiologicalReaction direction="left-to-right" evidence="2">
        <dbReference type="Rhea" id="RHEA:69413"/>
    </physiologicalReaction>
</comment>
<comment type="catalytic activity">
    <reaction evidence="2">
        <text>cumene hydroperoxide + 2 glutathione = 2-phenylpropan-2-ol + glutathione disulfide + H2O</text>
        <dbReference type="Rhea" id="RHEA:69651"/>
        <dbReference type="ChEBI" id="CHEBI:15377"/>
        <dbReference type="ChEBI" id="CHEBI:57925"/>
        <dbReference type="ChEBI" id="CHEBI:58297"/>
        <dbReference type="ChEBI" id="CHEBI:78673"/>
        <dbReference type="ChEBI" id="CHEBI:131607"/>
    </reaction>
    <physiologicalReaction direction="left-to-right" evidence="2">
        <dbReference type="Rhea" id="RHEA:69652"/>
    </physiologicalReaction>
</comment>
<comment type="catalytic activity">
    <reaction evidence="2">
        <text>(13S)-hydroperoxy-(9Z,11E)-octadecadienoate + 2 glutathione = (13S)-hydroxy-(9Z,11E)-octadecadienoate + glutathione disulfide + H2O</text>
        <dbReference type="Rhea" id="RHEA:48888"/>
        <dbReference type="ChEBI" id="CHEBI:15377"/>
        <dbReference type="ChEBI" id="CHEBI:57466"/>
        <dbReference type="ChEBI" id="CHEBI:57925"/>
        <dbReference type="ChEBI" id="CHEBI:58297"/>
        <dbReference type="ChEBI" id="CHEBI:90850"/>
    </reaction>
    <physiologicalReaction direction="left-to-right" evidence="2">
        <dbReference type="Rhea" id="RHEA:48889"/>
    </physiologicalReaction>
</comment>
<comment type="catalytic activity">
    <reaction evidence="2">
        <text>(5S)-hydroperoxy-(6E,8Z,11Z,14Z)-eicosatetraenoate + 2 glutathione = (5S)-hydroxy-(6E,8Z,11Z,14Z)-eicosatetraenoate + glutathione disulfide + H2O</text>
        <dbReference type="Rhea" id="RHEA:48620"/>
        <dbReference type="ChEBI" id="CHEBI:15377"/>
        <dbReference type="ChEBI" id="CHEBI:57450"/>
        <dbReference type="ChEBI" id="CHEBI:57925"/>
        <dbReference type="ChEBI" id="CHEBI:58297"/>
        <dbReference type="ChEBI" id="CHEBI:90632"/>
    </reaction>
    <physiologicalReaction direction="left-to-right" evidence="2">
        <dbReference type="Rhea" id="RHEA:48621"/>
    </physiologicalReaction>
</comment>
<comment type="catalytic activity">
    <reaction evidence="2">
        <text>(12R)-hydroperoxy-(5Z,8Z,10E,14Z)-eicosatetraenoate + 2 glutathione = (12R)-hydroxy-(5Z,8Z,10E,14Z)-eicosatetraenoate + glutathione disulfide + H2O</text>
        <dbReference type="Rhea" id="RHEA:76691"/>
        <dbReference type="ChEBI" id="CHEBI:15377"/>
        <dbReference type="ChEBI" id="CHEBI:57925"/>
        <dbReference type="ChEBI" id="CHEBI:58297"/>
        <dbReference type="ChEBI" id="CHEBI:75230"/>
        <dbReference type="ChEBI" id="CHEBI:83343"/>
    </reaction>
    <physiologicalReaction direction="left-to-right" evidence="2">
        <dbReference type="Rhea" id="RHEA:76692"/>
    </physiologicalReaction>
</comment>
<comment type="catalytic activity">
    <reaction evidence="2">
        <text>(15S)-hydroperoxy-(5Z,8Z,11Z,13E)-eicosatetraenoate + 2 glutathione = (15S)-hydroxy-(5Z,8Z,11Z,13E)-eicosatetraenoate + glutathione disulfide + H2O</text>
        <dbReference type="Rhea" id="RHEA:76695"/>
        <dbReference type="ChEBI" id="CHEBI:15377"/>
        <dbReference type="ChEBI" id="CHEBI:57409"/>
        <dbReference type="ChEBI" id="CHEBI:57446"/>
        <dbReference type="ChEBI" id="CHEBI:57925"/>
        <dbReference type="ChEBI" id="CHEBI:58297"/>
    </reaction>
    <physiologicalReaction direction="left-to-right" evidence="2">
        <dbReference type="Rhea" id="RHEA:76696"/>
    </physiologicalReaction>
</comment>
<comment type="subunit">
    <text evidence="2">Homotetramer.</text>
</comment>
<comment type="subcellular location">
    <subcellularLocation>
        <location evidence="2">Cytoplasm</location>
        <location evidence="2">Cytosol</location>
    </subcellularLocation>
</comment>
<comment type="similarity">
    <text evidence="3">Belongs to the glutathione peroxidase family.</text>
</comment>
<gene>
    <name type="primary">GPX2</name>
</gene>
<organism>
    <name type="scientific">Hylobates lar</name>
    <name type="common">Lar gibbon</name>
    <name type="synonym">White-handed gibbon</name>
    <dbReference type="NCBI Taxonomy" id="9580"/>
    <lineage>
        <taxon>Eukaryota</taxon>
        <taxon>Metazoa</taxon>
        <taxon>Chordata</taxon>
        <taxon>Craniata</taxon>
        <taxon>Vertebrata</taxon>
        <taxon>Euteleostomi</taxon>
        <taxon>Mammalia</taxon>
        <taxon>Eutheria</taxon>
        <taxon>Euarchontoglires</taxon>
        <taxon>Primates</taxon>
        <taxon>Haplorrhini</taxon>
        <taxon>Catarrhini</taxon>
        <taxon>Hylobatidae</taxon>
        <taxon>Hylobates</taxon>
    </lineage>
</organism>
<protein>
    <recommendedName>
        <fullName>Glutathione peroxidase 2</fullName>
        <shortName>GPx-2</shortName>
        <shortName>GSHPx-2</shortName>
        <ecNumber evidence="2">1.11.1.9</ecNumber>
    </recommendedName>
    <alternativeName>
        <fullName>Glutathione peroxidase-gastrointestinal</fullName>
        <shortName>GPx-GI</shortName>
        <shortName>GSHPx-GI</shortName>
    </alternativeName>
    <alternativeName>
        <fullName>Phospholipid hydroperoxide glutathione peroxidase GPX2</fullName>
        <ecNumber evidence="2">1.11.1.12</ecNumber>
    </alternativeName>
</protein>
<name>GPX2_HYLLA</name>